<organism evidence="4">
    <name type="scientific">Mus musculus</name>
    <name type="common">Mouse</name>
    <dbReference type="NCBI Taxonomy" id="10090"/>
    <lineage>
        <taxon>Eukaryota</taxon>
        <taxon>Metazoa</taxon>
        <taxon>Chordata</taxon>
        <taxon>Craniata</taxon>
        <taxon>Vertebrata</taxon>
        <taxon>Euteleostomi</taxon>
        <taxon>Mammalia</taxon>
        <taxon>Eutheria</taxon>
        <taxon>Euarchontoglires</taxon>
        <taxon>Glires</taxon>
        <taxon>Rodentia</taxon>
        <taxon>Myomorpha</taxon>
        <taxon>Muroidea</taxon>
        <taxon>Muridae</taxon>
        <taxon>Murinae</taxon>
        <taxon>Mus</taxon>
        <taxon>Mus</taxon>
    </lineage>
</organism>
<gene>
    <name type="primary">Tas2r3</name>
    <name type="synonym">T2r41</name>
    <name type="synonym">Tas2r137</name>
    <name type="synonym">Tas2r37</name>
</gene>
<dbReference type="EMBL" id="AF532788">
    <property type="protein sequence ID" value="AAP40338.1"/>
    <property type="status" value="ALT_SEQ"/>
    <property type="molecule type" value="Genomic_DNA"/>
</dbReference>
<dbReference type="EMBL" id="AC155653">
    <property type="status" value="NOT_ANNOTATED_CDS"/>
    <property type="molecule type" value="Genomic_DNA"/>
</dbReference>
<dbReference type="EMBL" id="BK001070">
    <property type="protein sequence ID" value="DAA01209.1"/>
    <property type="molecule type" value="Genomic_DNA"/>
</dbReference>
<dbReference type="RefSeq" id="NP_001020556.1">
    <property type="nucleotide sequence ID" value="NM_001025385.1"/>
</dbReference>
<dbReference type="SMR" id="Q7TQA7"/>
<dbReference type="FunCoup" id="Q7TQA7">
    <property type="interactions" value="846"/>
</dbReference>
<dbReference type="STRING" id="10090.ENSMUSP00000063743"/>
<dbReference type="GlyCosmos" id="Q7TQA7">
    <property type="glycosylation" value="1 site, No reported glycans"/>
</dbReference>
<dbReference type="GlyGen" id="Q7TQA7">
    <property type="glycosylation" value="1 site"/>
</dbReference>
<dbReference type="PhosphoSitePlus" id="Q7TQA7"/>
<dbReference type="PaxDb" id="10090-ENSMUSP00000063743"/>
<dbReference type="GeneID" id="574417"/>
<dbReference type="KEGG" id="mmu:574417"/>
<dbReference type="UCSC" id="uc009bmv.1">
    <property type="organism name" value="mouse"/>
</dbReference>
<dbReference type="AGR" id="MGI:3606604"/>
<dbReference type="CTD" id="574417"/>
<dbReference type="MGI" id="MGI:3606604">
    <property type="gene designation" value="Tas2r137"/>
</dbReference>
<dbReference type="eggNOG" id="ENOG502SKRK">
    <property type="taxonomic scope" value="Eukaryota"/>
</dbReference>
<dbReference type="InParanoid" id="Q7TQA7"/>
<dbReference type="OrthoDB" id="8876749at2759"/>
<dbReference type="PhylomeDB" id="Q7TQA7"/>
<dbReference type="TreeFam" id="TF335891"/>
<dbReference type="Reactome" id="R-MMU-418594">
    <property type="pathway name" value="G alpha (i) signalling events"/>
</dbReference>
<dbReference type="Reactome" id="R-MMU-420499">
    <property type="pathway name" value="Class C/3 (Metabotropic glutamate/pheromone receptors)"/>
</dbReference>
<dbReference type="Reactome" id="R-MMU-9717207">
    <property type="pathway name" value="Sensory perception of sweet, bitter, and umami (glutamate) taste"/>
</dbReference>
<dbReference type="BioGRID-ORCS" id="574417">
    <property type="hits" value="3 hits in 77 CRISPR screens"/>
</dbReference>
<dbReference type="PRO" id="PR:Q7TQA7"/>
<dbReference type="Proteomes" id="UP000000589">
    <property type="component" value="Unplaced"/>
</dbReference>
<dbReference type="RNAct" id="Q7TQA7">
    <property type="molecule type" value="protein"/>
</dbReference>
<dbReference type="GO" id="GO:0016020">
    <property type="term" value="C:membrane"/>
    <property type="evidence" value="ECO:0000303"/>
    <property type="project" value="UniProtKB"/>
</dbReference>
<dbReference type="GO" id="GO:0033038">
    <property type="term" value="F:bitter taste receptor activity"/>
    <property type="evidence" value="ECO:0007669"/>
    <property type="project" value="InterPro"/>
</dbReference>
<dbReference type="GO" id="GO:0004930">
    <property type="term" value="F:G protein-coupled receptor activity"/>
    <property type="evidence" value="ECO:0007669"/>
    <property type="project" value="UniProtKB-KW"/>
</dbReference>
<dbReference type="GO" id="GO:0008527">
    <property type="term" value="F:taste receptor activity"/>
    <property type="evidence" value="ECO:0000303"/>
    <property type="project" value="UniProtKB"/>
</dbReference>
<dbReference type="GO" id="GO:0001580">
    <property type="term" value="P:detection of chemical stimulus involved in sensory perception of bitter taste"/>
    <property type="evidence" value="ECO:0000303"/>
    <property type="project" value="UniProtKB"/>
</dbReference>
<dbReference type="FunFam" id="1.20.1070.10:FF:000042">
    <property type="entry name" value="Taste receptor type 2 member 7"/>
    <property type="match status" value="1"/>
</dbReference>
<dbReference type="Gene3D" id="1.20.1070.10">
    <property type="entry name" value="Rhodopsin 7-helix transmembrane proteins"/>
    <property type="match status" value="1"/>
</dbReference>
<dbReference type="InterPro" id="IPR017452">
    <property type="entry name" value="GPCR_Rhodpsn_7TM"/>
</dbReference>
<dbReference type="InterPro" id="IPR007960">
    <property type="entry name" value="TAS2R"/>
</dbReference>
<dbReference type="PANTHER" id="PTHR11394">
    <property type="entry name" value="TASTE RECEPTOR TYPE 2"/>
    <property type="match status" value="1"/>
</dbReference>
<dbReference type="PANTHER" id="PTHR11394:SF49">
    <property type="entry name" value="TASTE RECEPTOR TYPE 2 MEMBER 3"/>
    <property type="match status" value="1"/>
</dbReference>
<dbReference type="Pfam" id="PF05296">
    <property type="entry name" value="TAS2R"/>
    <property type="match status" value="1"/>
</dbReference>
<dbReference type="SUPFAM" id="SSF81321">
    <property type="entry name" value="Family A G protein-coupled receptor-like"/>
    <property type="match status" value="1"/>
</dbReference>
<dbReference type="PROSITE" id="PS50262">
    <property type="entry name" value="G_PROTEIN_RECEP_F1_2"/>
    <property type="match status" value="1"/>
</dbReference>
<keyword id="KW-0297">G-protein coupled receptor</keyword>
<keyword id="KW-0325">Glycoprotein</keyword>
<keyword id="KW-0472">Membrane</keyword>
<keyword id="KW-0675">Receptor</keyword>
<keyword id="KW-1185">Reference proteome</keyword>
<keyword id="KW-0716">Sensory transduction</keyword>
<keyword id="KW-0919">Taste</keyword>
<keyword id="KW-0807">Transducer</keyword>
<keyword id="KW-0812">Transmembrane</keyword>
<keyword id="KW-1133">Transmembrane helix</keyword>
<comment type="function">
    <text evidence="1">Gustducin-coupled receptor implicated in the perception of bitter compounds in the oral cavity and the gastrointestinal tract. Signals through PLCB2 and the calcium-regulated cation channel TRPM5 (By similarity).</text>
</comment>
<comment type="subcellular location">
    <subcellularLocation>
        <location>Membrane</location>
        <topology>Multi-pass membrane protein</topology>
    </subcellularLocation>
</comment>
<comment type="miscellaneous">
    <text>Several bitter taste receptors are expressed in a single taste receptor cell.</text>
</comment>
<comment type="similarity">
    <text evidence="3">Belongs to the G-protein coupled receptor T2R family.</text>
</comment>
<comment type="sequence caution" evidence="3">
    <conflict type="erroneous gene model prediction">
        <sequence resource="EMBL-CDS" id="AAP40338"/>
    </conflict>
</comment>
<evidence type="ECO:0000250" key="1"/>
<evidence type="ECO:0000255" key="2"/>
<evidence type="ECO:0000305" key="3"/>
<evidence type="ECO:0000312" key="4">
    <source>
        <dbReference type="EMBL" id="AAP40338.1"/>
    </source>
</evidence>
<proteinExistence type="inferred from homology"/>
<name>TA2R3_MOUSE</name>
<reference evidence="4" key="1">
    <citation type="journal article" date="2003" name="Physiol. Genomics">
        <title>Evolutionary relationships of the Tas2r receptor gene families in mouse and human.</title>
        <authorList>
            <person name="Conte C."/>
            <person name="Ebeling M."/>
            <person name="Marcuz A."/>
            <person name="Nef P."/>
            <person name="Andres-Barquin P.J."/>
        </authorList>
    </citation>
    <scope>NUCLEOTIDE SEQUENCE [GENOMIC DNA]</scope>
    <source>
        <strain evidence="4">C57BL/6J</strain>
    </source>
</reference>
<reference key="2">
    <citation type="journal article" date="2009" name="PLoS Biol.">
        <title>Lineage-specific biology revealed by a finished genome assembly of the mouse.</title>
        <authorList>
            <person name="Church D.M."/>
            <person name="Goodstadt L."/>
            <person name="Hillier L.W."/>
            <person name="Zody M.C."/>
            <person name="Goldstein S."/>
            <person name="She X."/>
            <person name="Bult C.J."/>
            <person name="Agarwala R."/>
            <person name="Cherry J.L."/>
            <person name="DiCuccio M."/>
            <person name="Hlavina W."/>
            <person name="Kapustin Y."/>
            <person name="Meric P."/>
            <person name="Maglott D."/>
            <person name="Birtle Z."/>
            <person name="Marques A.C."/>
            <person name="Graves T."/>
            <person name="Zhou S."/>
            <person name="Teague B."/>
            <person name="Potamousis K."/>
            <person name="Churas C."/>
            <person name="Place M."/>
            <person name="Herschleb J."/>
            <person name="Runnheim R."/>
            <person name="Forrest D."/>
            <person name="Amos-Landgraf J."/>
            <person name="Schwartz D.C."/>
            <person name="Cheng Z."/>
            <person name="Lindblad-Toh K."/>
            <person name="Eichler E.E."/>
            <person name="Ponting C.P."/>
        </authorList>
    </citation>
    <scope>NUCLEOTIDE SEQUENCE [LARGE SCALE GENOMIC DNA]</scope>
    <source>
        <strain>C57BL/6J</strain>
    </source>
</reference>
<reference evidence="3" key="3">
    <citation type="journal article" date="2003" name="Mol. Biol. Evol.">
        <title>Adaptive diversification of bitter taste receptor genes in mammalian evolution.</title>
        <authorList>
            <person name="Shi P."/>
            <person name="Zhang J."/>
            <person name="Yang H."/>
            <person name="Zhang Y.-P."/>
        </authorList>
    </citation>
    <scope>IDENTIFICATION</scope>
</reference>
<sequence>MFGFIEGVFLVLTITEFILGNLVNGFIVSINSSYWFKSKKISLSNFIITSLALFRIFLLWIIFIDSLIIVFSYQTHDSGIMMQLIDVFWTFTNHFSIWLISCLSVFYCLKIASFSHPSFLWLKWRASRVVVGMLWGALLLSCVSTMSLMNEFKIYSALTRSKDTPNMTEYIRLKRQEYNLMHVLGNLWKIPSLIVSLVAYLLLLLSLGKHTQQMQQYSIDSRDQSAEAHKRAMRIISSFLLFFLFYFLSFMILSSSRFLPETRIARIIGVVISMSYLVGDSFILIVCNNKLKHTFVAMLPCECGHLKPGSKGPSAS</sequence>
<feature type="chain" id="PRO_0000082202" description="Taste receptor type 2 member 3">
    <location>
        <begin position="1"/>
        <end position="316"/>
    </location>
</feature>
<feature type="topological domain" description="Extracellular" evidence="2">
    <location>
        <begin position="1"/>
        <end position="7"/>
    </location>
</feature>
<feature type="transmembrane region" description="Helical; Name=1" evidence="2">
    <location>
        <begin position="8"/>
        <end position="28"/>
    </location>
</feature>
<feature type="topological domain" description="Cytoplasmic" evidence="2">
    <location>
        <begin position="29"/>
        <end position="50"/>
    </location>
</feature>
<feature type="transmembrane region" description="Helical; Name=2" evidence="2">
    <location>
        <begin position="51"/>
        <end position="71"/>
    </location>
</feature>
<feature type="topological domain" description="Extracellular" evidence="2">
    <location>
        <begin position="72"/>
        <end position="86"/>
    </location>
</feature>
<feature type="transmembrane region" description="Helical; Name=3" evidence="2">
    <location>
        <begin position="87"/>
        <end position="107"/>
    </location>
</feature>
<feature type="topological domain" description="Cytoplasmic" evidence="2">
    <location>
        <begin position="108"/>
        <end position="128"/>
    </location>
</feature>
<feature type="transmembrane region" description="Helical; Name=4" evidence="2">
    <location>
        <begin position="129"/>
        <end position="149"/>
    </location>
</feature>
<feature type="topological domain" description="Extracellular" evidence="2">
    <location>
        <begin position="150"/>
        <end position="186"/>
    </location>
</feature>
<feature type="transmembrane region" description="Helical; Name=5" evidence="2">
    <location>
        <begin position="187"/>
        <end position="207"/>
    </location>
</feature>
<feature type="topological domain" description="Cytoplasmic" evidence="2">
    <location>
        <begin position="208"/>
        <end position="234"/>
    </location>
</feature>
<feature type="transmembrane region" description="Helical; Name=6" evidence="2">
    <location>
        <begin position="235"/>
        <end position="255"/>
    </location>
</feature>
<feature type="topological domain" description="Extracellular" evidence="2">
    <location>
        <begin position="256"/>
        <end position="266"/>
    </location>
</feature>
<feature type="transmembrane region" description="Helical; Name=7" evidence="2">
    <location>
        <begin position="267"/>
        <end position="287"/>
    </location>
</feature>
<feature type="topological domain" description="Cytoplasmic" evidence="2">
    <location>
        <begin position="288"/>
        <end position="316"/>
    </location>
</feature>
<feature type="glycosylation site" description="N-linked (GlcNAc...) asparagine" evidence="2">
    <location>
        <position position="166"/>
    </location>
</feature>
<accession>Q7TQA7</accession>
<accession>Q7M727</accession>
<protein>
    <recommendedName>
        <fullName>Taste receptor type 2 member 3</fullName>
        <shortName>T2R3</shortName>
    </recommendedName>
    <alternativeName>
        <fullName>T2R137</fullName>
        <shortName>T2R37</shortName>
    </alternativeName>
    <alternativeName>
        <fullName>mT2r41</fullName>
    </alternativeName>
</protein>